<evidence type="ECO:0000250" key="1"/>
<evidence type="ECO:0000255" key="2"/>
<evidence type="ECO:0000305" key="3"/>
<keyword id="KW-1003">Cell membrane</keyword>
<keyword id="KW-0472">Membrane</keyword>
<keyword id="KW-0484">Methanogenesis</keyword>
<keyword id="KW-0489">Methyltransferase</keyword>
<keyword id="KW-0554">One-carbon metabolism</keyword>
<keyword id="KW-1185">Reference proteome</keyword>
<keyword id="KW-0808">Transferase</keyword>
<keyword id="KW-1278">Translocase</keyword>
<keyword id="KW-0812">Transmembrane</keyword>
<keyword id="KW-1133">Transmembrane helix</keyword>
<accession>O27230</accession>
<reference key="1">
    <citation type="journal article" date="1997" name="J. Bacteriol.">
        <title>Complete genome sequence of Methanobacterium thermoautotrophicum deltaH: functional analysis and comparative genomics.</title>
        <authorList>
            <person name="Smith D.R."/>
            <person name="Doucette-Stamm L.A."/>
            <person name="Deloughery C."/>
            <person name="Lee H.-M."/>
            <person name="Dubois J."/>
            <person name="Aldredge T."/>
            <person name="Bashirzadeh R."/>
            <person name="Blakely D."/>
            <person name="Cook R."/>
            <person name="Gilbert K."/>
            <person name="Harrison D."/>
            <person name="Hoang L."/>
            <person name="Keagle P."/>
            <person name="Lumm W."/>
            <person name="Pothier B."/>
            <person name="Qiu D."/>
            <person name="Spadafora R."/>
            <person name="Vicare R."/>
            <person name="Wang Y."/>
            <person name="Wierzbowski J."/>
            <person name="Gibson R."/>
            <person name="Jiwani N."/>
            <person name="Caruso A."/>
            <person name="Bush D."/>
            <person name="Safer H."/>
            <person name="Patwell D."/>
            <person name="Prabhakar S."/>
            <person name="McDougall S."/>
            <person name="Shimer G."/>
            <person name="Goyal A."/>
            <person name="Pietrovski S."/>
            <person name="Church G.M."/>
            <person name="Daniels C.J."/>
            <person name="Mao J.-I."/>
            <person name="Rice P."/>
            <person name="Noelling J."/>
            <person name="Reeve J.N."/>
        </authorList>
    </citation>
    <scope>NUCLEOTIDE SEQUENCE [LARGE SCALE GENOMIC DNA]</scope>
    <source>
        <strain>ATCC 29096 / DSM 1053 / JCM 10044 / NBRC 100330 / Delta H</strain>
    </source>
</reference>
<proteinExistence type="inferred from homology"/>
<comment type="function">
    <text evidence="1">Part of a complex that catalyzes the formation of methyl-coenzyme M and tetrahydromethanopterin from coenzyme M and methyl-tetrahydromethanopterin. This is an energy-conserving, sodium-ion translocating step.</text>
</comment>
<comment type="catalytic activity">
    <reaction>
        <text>5-methyl-5,6,7,8-tetrahydromethanopterin + coenzyme M + 2 Na(+)(in) = 5,6,7,8-tetrahydromethanopterin + methyl-coenzyme M + 2 Na(+)(out)</text>
        <dbReference type="Rhea" id="RHEA:53492"/>
        <dbReference type="ChEBI" id="CHEBI:29101"/>
        <dbReference type="ChEBI" id="CHEBI:58103"/>
        <dbReference type="ChEBI" id="CHEBI:58116"/>
        <dbReference type="ChEBI" id="CHEBI:58286"/>
        <dbReference type="ChEBI" id="CHEBI:58319"/>
        <dbReference type="EC" id="7.2.1.4"/>
    </reaction>
</comment>
<comment type="pathway">
    <text>One-carbon metabolism; methanogenesis from CO(2); methyl-coenzyme M from 5,10-methylene-5,6,7,8-tetrahydromethanopterin: step 2/2.</text>
</comment>
<comment type="subunit">
    <text evidence="1">The complex is composed of 8 subunits; MtrA, MtrB, MtrC, MtrD, MtrE, MtrF, MtrG and MtrH.</text>
</comment>
<comment type="subcellular location">
    <subcellularLocation>
        <location evidence="3">Cell membrane</location>
        <topology evidence="3">Multi-pass membrane protein</topology>
    </subcellularLocation>
</comment>
<comment type="similarity">
    <text evidence="3">Belongs to the MtrD family.</text>
</comment>
<feature type="chain" id="PRO_0000147534" description="Tetrahydromethanopterin S-methyltransferase subunit D">
    <location>
        <begin position="1"/>
        <end position="233"/>
    </location>
</feature>
<feature type="transmembrane region" description="Helical" evidence="2">
    <location>
        <begin position="4"/>
        <end position="24"/>
    </location>
</feature>
<feature type="transmembrane region" description="Helical" evidence="2">
    <location>
        <begin position="39"/>
        <end position="59"/>
    </location>
</feature>
<feature type="transmembrane region" description="Helical" evidence="2">
    <location>
        <begin position="67"/>
        <end position="87"/>
    </location>
</feature>
<feature type="transmembrane region" description="Helical" evidence="2">
    <location>
        <begin position="133"/>
        <end position="153"/>
    </location>
</feature>
<feature type="transmembrane region" description="Helical" evidence="2">
    <location>
        <begin position="166"/>
        <end position="186"/>
    </location>
</feature>
<feature type="transmembrane region" description="Helical" evidence="2">
    <location>
        <begin position="209"/>
        <end position="229"/>
    </location>
</feature>
<protein>
    <recommendedName>
        <fullName>Tetrahydromethanopterin S-methyltransferase subunit D</fullName>
        <ecNumber>7.2.1.4</ecNumber>
    </recommendedName>
    <alternativeName>
        <fullName>N5-methyltetrahydromethanopterin--coenzyme M methyltransferase subunit D</fullName>
    </alternativeName>
</protein>
<dbReference type="EC" id="7.2.1.4"/>
<dbReference type="EMBL" id="AE000666">
    <property type="protein sequence ID" value="AAB85651.1"/>
    <property type="molecule type" value="Genomic_DNA"/>
</dbReference>
<dbReference type="PIR" id="H69021">
    <property type="entry name" value="H69021"/>
</dbReference>
<dbReference type="RefSeq" id="WP_010876786.1">
    <property type="nucleotide sequence ID" value="NC_000916.1"/>
</dbReference>
<dbReference type="SMR" id="O27230"/>
<dbReference type="FunCoup" id="O27230">
    <property type="interactions" value="71"/>
</dbReference>
<dbReference type="IntAct" id="O27230">
    <property type="interactions" value="2"/>
</dbReference>
<dbReference type="STRING" id="187420.MTH_1162"/>
<dbReference type="PaxDb" id="187420-MTH_1162"/>
<dbReference type="EnsemblBacteria" id="AAB85651">
    <property type="protein sequence ID" value="AAB85651"/>
    <property type="gene ID" value="MTH_1162"/>
</dbReference>
<dbReference type="GeneID" id="82297603"/>
<dbReference type="KEGG" id="mth:MTH_1162"/>
<dbReference type="PATRIC" id="fig|187420.15.peg.1139"/>
<dbReference type="HOGENOM" id="CLU_1109510_0_0_2"/>
<dbReference type="InParanoid" id="O27230"/>
<dbReference type="UniPathway" id="UPA00640">
    <property type="reaction ID" value="UER00698"/>
</dbReference>
<dbReference type="Proteomes" id="UP000005223">
    <property type="component" value="Chromosome"/>
</dbReference>
<dbReference type="GO" id="GO:0005737">
    <property type="term" value="C:cytoplasm"/>
    <property type="evidence" value="ECO:0007669"/>
    <property type="project" value="InterPro"/>
</dbReference>
<dbReference type="GO" id="GO:0005886">
    <property type="term" value="C:plasma membrane"/>
    <property type="evidence" value="ECO:0007669"/>
    <property type="project" value="UniProtKB-SubCell"/>
</dbReference>
<dbReference type="GO" id="GO:0012506">
    <property type="term" value="C:vesicle membrane"/>
    <property type="evidence" value="ECO:0007669"/>
    <property type="project" value="InterPro"/>
</dbReference>
<dbReference type="GO" id="GO:0030269">
    <property type="term" value="F:tetrahydromethanopterin S-methyltransferase activity"/>
    <property type="evidence" value="ECO:0007669"/>
    <property type="project" value="UniProtKB-UniRule"/>
</dbReference>
<dbReference type="GO" id="GO:0019386">
    <property type="term" value="P:methanogenesis, from carbon dioxide"/>
    <property type="evidence" value="ECO:0007669"/>
    <property type="project" value="UniProtKB-UniRule"/>
</dbReference>
<dbReference type="GO" id="GO:0032259">
    <property type="term" value="P:methylation"/>
    <property type="evidence" value="ECO:0007669"/>
    <property type="project" value="UniProtKB-KW"/>
</dbReference>
<dbReference type="GO" id="GO:0006730">
    <property type="term" value="P:one-carbon metabolic process"/>
    <property type="evidence" value="ECO:0007669"/>
    <property type="project" value="UniProtKB-UniRule"/>
</dbReference>
<dbReference type="HAMAP" id="MF_01097">
    <property type="entry name" value="MtrD"/>
    <property type="match status" value="1"/>
</dbReference>
<dbReference type="InterPro" id="IPR005779">
    <property type="entry name" value="MeTrfase_D"/>
</dbReference>
<dbReference type="NCBIfam" id="TIGR01112">
    <property type="entry name" value="mtrD"/>
    <property type="match status" value="1"/>
</dbReference>
<dbReference type="Pfam" id="PF04207">
    <property type="entry name" value="MtrD"/>
    <property type="match status" value="1"/>
</dbReference>
<dbReference type="PIRSF" id="PIRSF016552">
    <property type="entry name" value="MtrD"/>
    <property type="match status" value="1"/>
</dbReference>
<gene>
    <name type="primary">mtrD</name>
    <name type="ordered locus">MTH_1162</name>
</gene>
<sequence length="233" mass="22756">MDPLLLIGAITAGGVLIGGGVHFVPVGGAPAAMATATGVGTGTAMLAAGAGLTGLITAAAMTGQSPLMIMAAGAVGSMLMIGITMLVGNLIYVYGVGTVPVSAKVAVDPLTGMEQEKYVTPGTEGHGLPTVCFVSGIIGGALGGIGGGLIYWALNEALKTLSYGAIGAAGVAAIFAVGIFFINAVIASYNIGGTIEGFHDPKFKRIGRGIVACLIASIVAGALSTLLVYGGVF</sequence>
<name>MTRD_METTH</name>
<organism>
    <name type="scientific">Methanothermobacter thermautotrophicus (strain ATCC 29096 / DSM 1053 / JCM 10044 / NBRC 100330 / Delta H)</name>
    <name type="common">Methanobacterium thermoautotrophicum</name>
    <dbReference type="NCBI Taxonomy" id="187420"/>
    <lineage>
        <taxon>Archaea</taxon>
        <taxon>Methanobacteriati</taxon>
        <taxon>Methanobacteriota</taxon>
        <taxon>Methanomada group</taxon>
        <taxon>Methanobacteria</taxon>
        <taxon>Methanobacteriales</taxon>
        <taxon>Methanobacteriaceae</taxon>
        <taxon>Methanothermobacter</taxon>
    </lineage>
</organism>